<accession>Q7VQV8</accession>
<reference key="1">
    <citation type="journal article" date="2003" name="Proc. Natl. Acad. Sci. U.S.A.">
        <title>The genome sequence of Blochmannia floridanus: comparative analysis of reduced genomes.</title>
        <authorList>
            <person name="Gil R."/>
            <person name="Silva F.J."/>
            <person name="Zientz E."/>
            <person name="Delmotte F."/>
            <person name="Gonzalez-Candelas F."/>
            <person name="Latorre A."/>
            <person name="Rausell C."/>
            <person name="Kamerbeek J."/>
            <person name="Gadau J."/>
            <person name="Hoelldobler B."/>
            <person name="van Ham R.C.H.J."/>
            <person name="Gross R."/>
            <person name="Moya A."/>
        </authorList>
    </citation>
    <scope>NUCLEOTIDE SEQUENCE [LARGE SCALE GENOMIC DNA]</scope>
</reference>
<evidence type="ECO:0000255" key="1">
    <source>
        <dbReference type="HAMAP-Rule" id="MF_01346"/>
    </source>
</evidence>
<protein>
    <recommendedName>
        <fullName evidence="1">ATP synthase subunit alpha</fullName>
        <ecNumber evidence="1">7.1.2.2</ecNumber>
    </recommendedName>
    <alternativeName>
        <fullName evidence="1">ATP synthase F1 sector subunit alpha</fullName>
    </alternativeName>
    <alternativeName>
        <fullName evidence="1">F-ATPase subunit alpha</fullName>
    </alternativeName>
</protein>
<proteinExistence type="inferred from homology"/>
<sequence length="513" mass="56281">MRLNVNEISDIIRNRIKQLDIGCETRNEGTITSVADGVIYIHGLSNVMQGEMIALPYNKFAIALNLESSATGAIVMGSYENISEGMVVKCTGDILRVPVGPELLGRVVNALGVPIDNKGLINCSNYYPIESDAPGVIDRQSINEPIQTGYKSIDSMVPIGRGQRELIIGDRQTGKSALAIDTIINQSCSGVKCIYVAIGQKATTVVNVVKKLEEYHALDNTIVILASASESAILQYLAPYSGCAMGEYFRNNGQDALIVYDDLSKQAVAYRQLSLLLRRPPGREAYPGDIFYLHSRLLERSAKVRSEYIERCTQGKITGKTGSLTALPIIETQAGDVSAFIPTNVISITDGQIFLESQLFNAGVRPAINPGISVSRVGGSAQTKIMKVLSGGIRTALAQYRELAAFSQFSSELDNVTRKQLQHGQKVTELLKQKQYSCMSVACQAIILFAVSYGYLEDIELSKIGDFEAKLISYLTYHELELVKHINIYGSYDSNIENKLKNILEMFKLNKFS</sequence>
<feature type="chain" id="PRO_0000238206" description="ATP synthase subunit alpha">
    <location>
        <begin position="1"/>
        <end position="513"/>
    </location>
</feature>
<feature type="binding site" evidence="1">
    <location>
        <begin position="169"/>
        <end position="176"/>
    </location>
    <ligand>
        <name>ATP</name>
        <dbReference type="ChEBI" id="CHEBI:30616"/>
    </ligand>
</feature>
<feature type="site" description="Required for activity" evidence="1">
    <location>
        <position position="373"/>
    </location>
</feature>
<comment type="function">
    <text evidence="1">Produces ATP from ADP in the presence of a proton gradient across the membrane. The alpha chain is a regulatory subunit.</text>
</comment>
<comment type="catalytic activity">
    <reaction evidence="1">
        <text>ATP + H2O + 4 H(+)(in) = ADP + phosphate + 5 H(+)(out)</text>
        <dbReference type="Rhea" id="RHEA:57720"/>
        <dbReference type="ChEBI" id="CHEBI:15377"/>
        <dbReference type="ChEBI" id="CHEBI:15378"/>
        <dbReference type="ChEBI" id="CHEBI:30616"/>
        <dbReference type="ChEBI" id="CHEBI:43474"/>
        <dbReference type="ChEBI" id="CHEBI:456216"/>
        <dbReference type="EC" id="7.1.2.2"/>
    </reaction>
</comment>
<comment type="subunit">
    <text evidence="1">F-type ATPases have 2 components, CF(1) - the catalytic core - and CF(0) - the membrane proton channel. CF(1) has five subunits: alpha(3), beta(3), gamma(1), delta(1), epsilon(1). CF(0) has three main subunits: a(1), b(2) and c(9-12). The alpha and beta chains form an alternating ring which encloses part of the gamma chain. CF(1) is attached to CF(0) by a central stalk formed by the gamma and epsilon chains, while a peripheral stalk is formed by the delta and b chains.</text>
</comment>
<comment type="subcellular location">
    <subcellularLocation>
        <location evidence="1">Cell inner membrane</location>
        <topology evidence="1">Peripheral membrane protein</topology>
    </subcellularLocation>
</comment>
<comment type="similarity">
    <text evidence="1">Belongs to the ATPase alpha/beta chains family.</text>
</comment>
<name>ATPA_BLOFL</name>
<gene>
    <name evidence="1" type="primary">atpA</name>
    <name type="ordered locus">Bfl006</name>
</gene>
<organism>
    <name type="scientific">Blochmanniella floridana</name>
    <dbReference type="NCBI Taxonomy" id="203907"/>
    <lineage>
        <taxon>Bacteria</taxon>
        <taxon>Pseudomonadati</taxon>
        <taxon>Pseudomonadota</taxon>
        <taxon>Gammaproteobacteria</taxon>
        <taxon>Enterobacterales</taxon>
        <taxon>Enterobacteriaceae</taxon>
        <taxon>ant endosymbionts</taxon>
        <taxon>Candidatus Blochmanniella</taxon>
    </lineage>
</organism>
<keyword id="KW-0066">ATP synthesis</keyword>
<keyword id="KW-0067">ATP-binding</keyword>
<keyword id="KW-0997">Cell inner membrane</keyword>
<keyword id="KW-1003">Cell membrane</keyword>
<keyword id="KW-0139">CF(1)</keyword>
<keyword id="KW-0375">Hydrogen ion transport</keyword>
<keyword id="KW-0406">Ion transport</keyword>
<keyword id="KW-0472">Membrane</keyword>
<keyword id="KW-0547">Nucleotide-binding</keyword>
<keyword id="KW-1185">Reference proteome</keyword>
<keyword id="KW-1278">Translocase</keyword>
<keyword id="KW-0813">Transport</keyword>
<dbReference type="EC" id="7.1.2.2" evidence="1"/>
<dbReference type="EMBL" id="BX248583">
    <property type="protein sequence ID" value="CAD83534.1"/>
    <property type="molecule type" value="Genomic_DNA"/>
</dbReference>
<dbReference type="SMR" id="Q7VQV8"/>
<dbReference type="STRING" id="203907.Bfl006"/>
<dbReference type="KEGG" id="bfl:Bfl006"/>
<dbReference type="eggNOG" id="COG0056">
    <property type="taxonomic scope" value="Bacteria"/>
</dbReference>
<dbReference type="HOGENOM" id="CLU_010091_2_1_6"/>
<dbReference type="OrthoDB" id="9803053at2"/>
<dbReference type="Proteomes" id="UP000002192">
    <property type="component" value="Chromosome"/>
</dbReference>
<dbReference type="GO" id="GO:0005886">
    <property type="term" value="C:plasma membrane"/>
    <property type="evidence" value="ECO:0007669"/>
    <property type="project" value="UniProtKB-SubCell"/>
</dbReference>
<dbReference type="GO" id="GO:0045259">
    <property type="term" value="C:proton-transporting ATP synthase complex"/>
    <property type="evidence" value="ECO:0007669"/>
    <property type="project" value="UniProtKB-KW"/>
</dbReference>
<dbReference type="GO" id="GO:0043531">
    <property type="term" value="F:ADP binding"/>
    <property type="evidence" value="ECO:0007669"/>
    <property type="project" value="TreeGrafter"/>
</dbReference>
<dbReference type="GO" id="GO:0005524">
    <property type="term" value="F:ATP binding"/>
    <property type="evidence" value="ECO:0007669"/>
    <property type="project" value="UniProtKB-UniRule"/>
</dbReference>
<dbReference type="GO" id="GO:0046933">
    <property type="term" value="F:proton-transporting ATP synthase activity, rotational mechanism"/>
    <property type="evidence" value="ECO:0007669"/>
    <property type="project" value="UniProtKB-UniRule"/>
</dbReference>
<dbReference type="CDD" id="cd18113">
    <property type="entry name" value="ATP-synt_F1_alpha_C"/>
    <property type="match status" value="1"/>
</dbReference>
<dbReference type="CDD" id="cd18116">
    <property type="entry name" value="ATP-synt_F1_alpha_N"/>
    <property type="match status" value="1"/>
</dbReference>
<dbReference type="CDD" id="cd01132">
    <property type="entry name" value="F1-ATPase_alpha_CD"/>
    <property type="match status" value="1"/>
</dbReference>
<dbReference type="FunFam" id="1.20.150.20:FF:000001">
    <property type="entry name" value="ATP synthase subunit alpha"/>
    <property type="match status" value="1"/>
</dbReference>
<dbReference type="FunFam" id="3.40.50.300:FF:000002">
    <property type="entry name" value="ATP synthase subunit alpha"/>
    <property type="match status" value="1"/>
</dbReference>
<dbReference type="Gene3D" id="2.40.30.20">
    <property type="match status" value="1"/>
</dbReference>
<dbReference type="Gene3D" id="1.20.150.20">
    <property type="entry name" value="ATP synthase alpha/beta chain, C-terminal domain"/>
    <property type="match status" value="1"/>
</dbReference>
<dbReference type="Gene3D" id="3.40.50.300">
    <property type="entry name" value="P-loop containing nucleotide triphosphate hydrolases"/>
    <property type="match status" value="1"/>
</dbReference>
<dbReference type="HAMAP" id="MF_01346">
    <property type="entry name" value="ATP_synth_alpha_bact"/>
    <property type="match status" value="1"/>
</dbReference>
<dbReference type="InterPro" id="IPR023366">
    <property type="entry name" value="ATP_synth_asu-like_sf"/>
</dbReference>
<dbReference type="InterPro" id="IPR000793">
    <property type="entry name" value="ATP_synth_asu_C"/>
</dbReference>
<dbReference type="InterPro" id="IPR038376">
    <property type="entry name" value="ATP_synth_asu_C_sf"/>
</dbReference>
<dbReference type="InterPro" id="IPR033732">
    <property type="entry name" value="ATP_synth_F1_a_nt-bd_dom"/>
</dbReference>
<dbReference type="InterPro" id="IPR005294">
    <property type="entry name" value="ATP_synth_F1_asu"/>
</dbReference>
<dbReference type="InterPro" id="IPR020003">
    <property type="entry name" value="ATPase_a/bsu_AS"/>
</dbReference>
<dbReference type="InterPro" id="IPR004100">
    <property type="entry name" value="ATPase_F1/V1/A1_a/bsu_N"/>
</dbReference>
<dbReference type="InterPro" id="IPR036121">
    <property type="entry name" value="ATPase_F1/V1/A1_a/bsu_N_sf"/>
</dbReference>
<dbReference type="InterPro" id="IPR000194">
    <property type="entry name" value="ATPase_F1/V1/A1_a/bsu_nucl-bd"/>
</dbReference>
<dbReference type="InterPro" id="IPR027417">
    <property type="entry name" value="P-loop_NTPase"/>
</dbReference>
<dbReference type="NCBIfam" id="TIGR00962">
    <property type="entry name" value="atpA"/>
    <property type="match status" value="1"/>
</dbReference>
<dbReference type="NCBIfam" id="NF009884">
    <property type="entry name" value="PRK13343.1"/>
    <property type="match status" value="1"/>
</dbReference>
<dbReference type="PANTHER" id="PTHR48082">
    <property type="entry name" value="ATP SYNTHASE SUBUNIT ALPHA, MITOCHONDRIAL"/>
    <property type="match status" value="1"/>
</dbReference>
<dbReference type="PANTHER" id="PTHR48082:SF2">
    <property type="entry name" value="ATP SYNTHASE SUBUNIT ALPHA, MITOCHONDRIAL"/>
    <property type="match status" value="1"/>
</dbReference>
<dbReference type="Pfam" id="PF00006">
    <property type="entry name" value="ATP-synt_ab"/>
    <property type="match status" value="1"/>
</dbReference>
<dbReference type="Pfam" id="PF00306">
    <property type="entry name" value="ATP-synt_ab_C"/>
    <property type="match status" value="1"/>
</dbReference>
<dbReference type="Pfam" id="PF02874">
    <property type="entry name" value="ATP-synt_ab_N"/>
    <property type="match status" value="1"/>
</dbReference>
<dbReference type="SUPFAM" id="SSF47917">
    <property type="entry name" value="C-terminal domain of alpha and beta subunits of F1 ATP synthase"/>
    <property type="match status" value="1"/>
</dbReference>
<dbReference type="SUPFAM" id="SSF50615">
    <property type="entry name" value="N-terminal domain of alpha and beta subunits of F1 ATP synthase"/>
    <property type="match status" value="1"/>
</dbReference>
<dbReference type="SUPFAM" id="SSF52540">
    <property type="entry name" value="P-loop containing nucleoside triphosphate hydrolases"/>
    <property type="match status" value="1"/>
</dbReference>
<dbReference type="PROSITE" id="PS00152">
    <property type="entry name" value="ATPASE_ALPHA_BETA"/>
    <property type="match status" value="1"/>
</dbReference>